<organism>
    <name type="scientific">Staphylococcus epidermidis (strain ATCC 12228 / FDA PCI 1200)</name>
    <dbReference type="NCBI Taxonomy" id="176280"/>
    <lineage>
        <taxon>Bacteria</taxon>
        <taxon>Bacillati</taxon>
        <taxon>Bacillota</taxon>
        <taxon>Bacilli</taxon>
        <taxon>Bacillales</taxon>
        <taxon>Staphylococcaceae</taxon>
        <taxon>Staphylococcus</taxon>
    </lineage>
</organism>
<dbReference type="EC" id="3.5.2.3" evidence="1"/>
<dbReference type="EMBL" id="AE015929">
    <property type="protein sequence ID" value="AAO04474.1"/>
    <property type="molecule type" value="Genomic_DNA"/>
</dbReference>
<dbReference type="RefSeq" id="NP_764432.1">
    <property type="nucleotide sequence ID" value="NC_004461.1"/>
</dbReference>
<dbReference type="RefSeq" id="WP_002485025.1">
    <property type="nucleotide sequence ID" value="NC_004461.1"/>
</dbReference>
<dbReference type="SMR" id="Q8CPJ6"/>
<dbReference type="KEGG" id="sep:SE_0877"/>
<dbReference type="PATRIC" id="fig|176280.10.peg.849"/>
<dbReference type="eggNOG" id="COG0044">
    <property type="taxonomic scope" value="Bacteria"/>
</dbReference>
<dbReference type="HOGENOM" id="CLU_015572_1_0_9"/>
<dbReference type="OrthoDB" id="9765462at2"/>
<dbReference type="UniPathway" id="UPA00070">
    <property type="reaction ID" value="UER00117"/>
</dbReference>
<dbReference type="Proteomes" id="UP000001411">
    <property type="component" value="Chromosome"/>
</dbReference>
<dbReference type="GO" id="GO:0005737">
    <property type="term" value="C:cytoplasm"/>
    <property type="evidence" value="ECO:0007669"/>
    <property type="project" value="TreeGrafter"/>
</dbReference>
<dbReference type="GO" id="GO:0004038">
    <property type="term" value="F:allantoinase activity"/>
    <property type="evidence" value="ECO:0007669"/>
    <property type="project" value="TreeGrafter"/>
</dbReference>
<dbReference type="GO" id="GO:0004151">
    <property type="term" value="F:dihydroorotase activity"/>
    <property type="evidence" value="ECO:0007669"/>
    <property type="project" value="UniProtKB-UniRule"/>
</dbReference>
<dbReference type="GO" id="GO:0008270">
    <property type="term" value="F:zinc ion binding"/>
    <property type="evidence" value="ECO:0007669"/>
    <property type="project" value="UniProtKB-UniRule"/>
</dbReference>
<dbReference type="GO" id="GO:0044205">
    <property type="term" value="P:'de novo' UMP biosynthetic process"/>
    <property type="evidence" value="ECO:0007669"/>
    <property type="project" value="UniProtKB-UniRule"/>
</dbReference>
<dbReference type="GO" id="GO:0006145">
    <property type="term" value="P:purine nucleobase catabolic process"/>
    <property type="evidence" value="ECO:0007669"/>
    <property type="project" value="TreeGrafter"/>
</dbReference>
<dbReference type="CDD" id="cd01317">
    <property type="entry name" value="DHOase_IIa"/>
    <property type="match status" value="1"/>
</dbReference>
<dbReference type="Gene3D" id="3.20.20.140">
    <property type="entry name" value="Metal-dependent hydrolases"/>
    <property type="match status" value="1"/>
</dbReference>
<dbReference type="Gene3D" id="2.30.40.10">
    <property type="entry name" value="Urease, subunit C, domain 1"/>
    <property type="match status" value="2"/>
</dbReference>
<dbReference type="HAMAP" id="MF_00220_B">
    <property type="entry name" value="PyrC_classI_B"/>
    <property type="match status" value="1"/>
</dbReference>
<dbReference type="InterPro" id="IPR006680">
    <property type="entry name" value="Amidohydro-rel"/>
</dbReference>
<dbReference type="InterPro" id="IPR004722">
    <property type="entry name" value="DHOase"/>
</dbReference>
<dbReference type="InterPro" id="IPR050138">
    <property type="entry name" value="DHOase/Allantoinase_Hydrolase"/>
</dbReference>
<dbReference type="InterPro" id="IPR002195">
    <property type="entry name" value="Dihydroorotase_CS"/>
</dbReference>
<dbReference type="InterPro" id="IPR011059">
    <property type="entry name" value="Metal-dep_hydrolase_composite"/>
</dbReference>
<dbReference type="InterPro" id="IPR032466">
    <property type="entry name" value="Metal_Hydrolase"/>
</dbReference>
<dbReference type="NCBIfam" id="NF006837">
    <property type="entry name" value="PRK09357.1-2"/>
    <property type="match status" value="1"/>
</dbReference>
<dbReference type="NCBIfam" id="TIGR00857">
    <property type="entry name" value="pyrC_multi"/>
    <property type="match status" value="1"/>
</dbReference>
<dbReference type="PANTHER" id="PTHR43668">
    <property type="entry name" value="ALLANTOINASE"/>
    <property type="match status" value="1"/>
</dbReference>
<dbReference type="PANTHER" id="PTHR43668:SF2">
    <property type="entry name" value="ALLANTOINASE"/>
    <property type="match status" value="1"/>
</dbReference>
<dbReference type="Pfam" id="PF01979">
    <property type="entry name" value="Amidohydro_1"/>
    <property type="match status" value="1"/>
</dbReference>
<dbReference type="SUPFAM" id="SSF51338">
    <property type="entry name" value="Composite domain of metallo-dependent hydrolases"/>
    <property type="match status" value="1"/>
</dbReference>
<dbReference type="SUPFAM" id="SSF51556">
    <property type="entry name" value="Metallo-dependent hydrolases"/>
    <property type="match status" value="1"/>
</dbReference>
<dbReference type="PROSITE" id="PS00482">
    <property type="entry name" value="DIHYDROOROTASE_1"/>
    <property type="match status" value="1"/>
</dbReference>
<dbReference type="PROSITE" id="PS00483">
    <property type="entry name" value="DIHYDROOROTASE_2"/>
    <property type="match status" value="1"/>
</dbReference>
<gene>
    <name evidence="1" type="primary">pyrC</name>
    <name type="ordered locus">SE_0877</name>
</gene>
<name>PYRC_STAES</name>
<sequence>MKLIKNGKILKNGILKDTEILIDGKRIKQISSKINASSSNIEVIDAKGNLIAPGFVDVHVHLREPGGEHKETIESGTKAAARGGFTTVCPMPNTRPVPDTVEHVRELRQRISETAQVRVLPYAAITKRQAGTELVDFEKLALEGVFAFTDDGVGVQTASMMYAAMKQAVKVKKPIVAHCEDNSLIYGGAMHKGKRSEELGIPGIPNIAESVQIARDVLLAEATGCHYHVCHVSTKESVRVIRDAKKAGIHVTAEVTPHHLLLTENDVPGDDSNYKMNPPLRSNEDREALLEGLLDGTIDCIATDHAPHAKEEKAQPMTKAPFGIVGSETAFPLLYTHFVRRGNWSLQQLVDYFTIKPATIFNLNYGKLHKDSYADLTIIDLNTEKEIKSEDFLSKADNTPFIGEKVYGNPTLTMLKGEVVFEEEK</sequence>
<comment type="function">
    <text evidence="1">Catalyzes the reversible cyclization of carbamoyl aspartate to dihydroorotate.</text>
</comment>
<comment type="catalytic activity">
    <reaction evidence="1">
        <text>(S)-dihydroorotate + H2O = N-carbamoyl-L-aspartate + H(+)</text>
        <dbReference type="Rhea" id="RHEA:24296"/>
        <dbReference type="ChEBI" id="CHEBI:15377"/>
        <dbReference type="ChEBI" id="CHEBI:15378"/>
        <dbReference type="ChEBI" id="CHEBI:30864"/>
        <dbReference type="ChEBI" id="CHEBI:32814"/>
        <dbReference type="EC" id="3.5.2.3"/>
    </reaction>
</comment>
<comment type="cofactor">
    <cofactor evidence="1">
        <name>Zn(2+)</name>
        <dbReference type="ChEBI" id="CHEBI:29105"/>
    </cofactor>
    <text evidence="1">Binds 2 Zn(2+) ions per subunit.</text>
</comment>
<comment type="pathway">
    <text evidence="1">Pyrimidine metabolism; UMP biosynthesis via de novo pathway; (S)-dihydroorotate from bicarbonate: step 3/3.</text>
</comment>
<comment type="similarity">
    <text evidence="1">Belongs to the metallo-dependent hydrolases superfamily. DHOase family. Class I DHOase subfamily.</text>
</comment>
<keyword id="KW-0378">Hydrolase</keyword>
<keyword id="KW-0479">Metal-binding</keyword>
<keyword id="KW-0665">Pyrimidine biosynthesis</keyword>
<keyword id="KW-0862">Zinc</keyword>
<feature type="chain" id="PRO_0000147252" description="Dihydroorotase">
    <location>
        <begin position="1"/>
        <end position="425"/>
    </location>
</feature>
<feature type="active site" evidence="1">
    <location>
        <position position="304"/>
    </location>
</feature>
<feature type="binding site" evidence="1">
    <location>
        <position position="59"/>
    </location>
    <ligand>
        <name>Zn(2+)</name>
        <dbReference type="ChEBI" id="CHEBI:29105"/>
        <label>1</label>
    </ligand>
</feature>
<feature type="binding site" evidence="1">
    <location>
        <begin position="61"/>
        <end position="63"/>
    </location>
    <ligand>
        <name>substrate</name>
    </ligand>
</feature>
<feature type="binding site" evidence="1">
    <location>
        <position position="61"/>
    </location>
    <ligand>
        <name>Zn(2+)</name>
        <dbReference type="ChEBI" id="CHEBI:29105"/>
        <label>1</label>
    </ligand>
</feature>
<feature type="binding site" evidence="1">
    <location>
        <position position="93"/>
    </location>
    <ligand>
        <name>substrate</name>
    </ligand>
</feature>
<feature type="binding site" evidence="1">
    <location>
        <position position="151"/>
    </location>
    <ligand>
        <name>Zn(2+)</name>
        <dbReference type="ChEBI" id="CHEBI:29105"/>
        <label>1</label>
    </ligand>
</feature>
<feature type="binding site" evidence="1">
    <location>
        <position position="151"/>
    </location>
    <ligand>
        <name>Zn(2+)</name>
        <dbReference type="ChEBI" id="CHEBI:29105"/>
        <label>2</label>
    </ligand>
</feature>
<feature type="binding site" evidence="1">
    <location>
        <position position="178"/>
    </location>
    <ligand>
        <name>Zn(2+)</name>
        <dbReference type="ChEBI" id="CHEBI:29105"/>
        <label>2</label>
    </ligand>
</feature>
<feature type="binding site" evidence="1">
    <location>
        <position position="231"/>
    </location>
    <ligand>
        <name>Zn(2+)</name>
        <dbReference type="ChEBI" id="CHEBI:29105"/>
        <label>2</label>
    </ligand>
</feature>
<feature type="binding site" evidence="1">
    <location>
        <position position="277"/>
    </location>
    <ligand>
        <name>substrate</name>
    </ligand>
</feature>
<feature type="binding site" evidence="1">
    <location>
        <position position="304"/>
    </location>
    <ligand>
        <name>Zn(2+)</name>
        <dbReference type="ChEBI" id="CHEBI:29105"/>
        <label>1</label>
    </ligand>
</feature>
<feature type="binding site" evidence="1">
    <location>
        <position position="308"/>
    </location>
    <ligand>
        <name>substrate</name>
    </ligand>
</feature>
<feature type="binding site" evidence="1">
    <location>
        <begin position="322"/>
        <end position="323"/>
    </location>
    <ligand>
        <name>substrate</name>
    </ligand>
</feature>
<proteinExistence type="inferred from homology"/>
<evidence type="ECO:0000255" key="1">
    <source>
        <dbReference type="HAMAP-Rule" id="MF_00220"/>
    </source>
</evidence>
<accession>Q8CPJ6</accession>
<reference key="1">
    <citation type="journal article" date="2003" name="Mol. Microbiol.">
        <title>Genome-based analysis of virulence genes in a non-biofilm-forming Staphylococcus epidermidis strain (ATCC 12228).</title>
        <authorList>
            <person name="Zhang Y.-Q."/>
            <person name="Ren S.-X."/>
            <person name="Li H.-L."/>
            <person name="Wang Y.-X."/>
            <person name="Fu G."/>
            <person name="Yang J."/>
            <person name="Qin Z.-Q."/>
            <person name="Miao Y.-G."/>
            <person name="Wang W.-Y."/>
            <person name="Chen R.-S."/>
            <person name="Shen Y."/>
            <person name="Chen Z."/>
            <person name="Yuan Z.-H."/>
            <person name="Zhao G.-P."/>
            <person name="Qu D."/>
            <person name="Danchin A."/>
            <person name="Wen Y.-M."/>
        </authorList>
    </citation>
    <scope>NUCLEOTIDE SEQUENCE [LARGE SCALE GENOMIC DNA]</scope>
    <source>
        <strain>ATCC 12228 / FDA PCI 1200</strain>
    </source>
</reference>
<protein>
    <recommendedName>
        <fullName evidence="1">Dihydroorotase</fullName>
        <shortName evidence="1">DHOase</shortName>
        <ecNumber evidence="1">3.5.2.3</ecNumber>
    </recommendedName>
</protein>